<accession>Q6P5C5</accession>
<accession>Q9DBV1</accession>
<gene>
    <name type="primary">Smug1</name>
</gene>
<name>SMUG1_MOUSE</name>
<keyword id="KW-0227">DNA damage</keyword>
<keyword id="KW-0234">DNA repair</keyword>
<keyword id="KW-0238">DNA-binding</keyword>
<keyword id="KW-0378">Hydrolase</keyword>
<keyword id="KW-0539">Nucleus</keyword>
<keyword id="KW-1185">Reference proteome</keyword>
<feature type="chain" id="PRO_0000071993" description="Single-strand selective monofunctional uracil DNA glycosylase">
    <location>
        <begin position="1"/>
        <end position="279"/>
    </location>
</feature>
<feature type="region of interest" description="DNA-binding" evidence="1">
    <location>
        <begin position="175"/>
        <end position="189"/>
    </location>
</feature>
<feature type="binding site" evidence="1">
    <location>
        <position position="86"/>
    </location>
    <ligand>
        <name>substrate</name>
    </ligand>
</feature>
<feature type="binding site" evidence="1">
    <location>
        <position position="100"/>
    </location>
    <ligand>
        <name>substrate</name>
    </ligand>
</feature>
<feature type="binding site" evidence="1">
    <location>
        <position position="165"/>
    </location>
    <ligand>
        <name>substrate</name>
    </ligand>
</feature>
<feature type="binding site" evidence="1">
    <location>
        <position position="241"/>
    </location>
    <ligand>
        <name>substrate</name>
    </ligand>
</feature>
<feature type="sequence conflict" description="In Ref. 1; BAB23517." evidence="3" ref="1">
    <original>L</original>
    <variation>H</variation>
    <location>
        <position position="239"/>
    </location>
</feature>
<reference key="1">
    <citation type="journal article" date="2005" name="Science">
        <title>The transcriptional landscape of the mammalian genome.</title>
        <authorList>
            <person name="Carninci P."/>
            <person name="Kasukawa T."/>
            <person name="Katayama S."/>
            <person name="Gough J."/>
            <person name="Frith M.C."/>
            <person name="Maeda N."/>
            <person name="Oyama R."/>
            <person name="Ravasi T."/>
            <person name="Lenhard B."/>
            <person name="Wells C."/>
            <person name="Kodzius R."/>
            <person name="Shimokawa K."/>
            <person name="Bajic V.B."/>
            <person name="Brenner S.E."/>
            <person name="Batalov S."/>
            <person name="Forrest A.R."/>
            <person name="Zavolan M."/>
            <person name="Davis M.J."/>
            <person name="Wilming L.G."/>
            <person name="Aidinis V."/>
            <person name="Allen J.E."/>
            <person name="Ambesi-Impiombato A."/>
            <person name="Apweiler R."/>
            <person name="Aturaliya R.N."/>
            <person name="Bailey T.L."/>
            <person name="Bansal M."/>
            <person name="Baxter L."/>
            <person name="Beisel K.W."/>
            <person name="Bersano T."/>
            <person name="Bono H."/>
            <person name="Chalk A.M."/>
            <person name="Chiu K.P."/>
            <person name="Choudhary V."/>
            <person name="Christoffels A."/>
            <person name="Clutterbuck D.R."/>
            <person name="Crowe M.L."/>
            <person name="Dalla E."/>
            <person name="Dalrymple B.P."/>
            <person name="de Bono B."/>
            <person name="Della Gatta G."/>
            <person name="di Bernardo D."/>
            <person name="Down T."/>
            <person name="Engstrom P."/>
            <person name="Fagiolini M."/>
            <person name="Faulkner G."/>
            <person name="Fletcher C.F."/>
            <person name="Fukushima T."/>
            <person name="Furuno M."/>
            <person name="Futaki S."/>
            <person name="Gariboldi M."/>
            <person name="Georgii-Hemming P."/>
            <person name="Gingeras T.R."/>
            <person name="Gojobori T."/>
            <person name="Green R.E."/>
            <person name="Gustincich S."/>
            <person name="Harbers M."/>
            <person name="Hayashi Y."/>
            <person name="Hensch T.K."/>
            <person name="Hirokawa N."/>
            <person name="Hill D."/>
            <person name="Huminiecki L."/>
            <person name="Iacono M."/>
            <person name="Ikeo K."/>
            <person name="Iwama A."/>
            <person name="Ishikawa T."/>
            <person name="Jakt M."/>
            <person name="Kanapin A."/>
            <person name="Katoh M."/>
            <person name="Kawasawa Y."/>
            <person name="Kelso J."/>
            <person name="Kitamura H."/>
            <person name="Kitano H."/>
            <person name="Kollias G."/>
            <person name="Krishnan S.P."/>
            <person name="Kruger A."/>
            <person name="Kummerfeld S.K."/>
            <person name="Kurochkin I.V."/>
            <person name="Lareau L.F."/>
            <person name="Lazarevic D."/>
            <person name="Lipovich L."/>
            <person name="Liu J."/>
            <person name="Liuni S."/>
            <person name="McWilliam S."/>
            <person name="Madan Babu M."/>
            <person name="Madera M."/>
            <person name="Marchionni L."/>
            <person name="Matsuda H."/>
            <person name="Matsuzawa S."/>
            <person name="Miki H."/>
            <person name="Mignone F."/>
            <person name="Miyake S."/>
            <person name="Morris K."/>
            <person name="Mottagui-Tabar S."/>
            <person name="Mulder N."/>
            <person name="Nakano N."/>
            <person name="Nakauchi H."/>
            <person name="Ng P."/>
            <person name="Nilsson R."/>
            <person name="Nishiguchi S."/>
            <person name="Nishikawa S."/>
            <person name="Nori F."/>
            <person name="Ohara O."/>
            <person name="Okazaki Y."/>
            <person name="Orlando V."/>
            <person name="Pang K.C."/>
            <person name="Pavan W.J."/>
            <person name="Pavesi G."/>
            <person name="Pesole G."/>
            <person name="Petrovsky N."/>
            <person name="Piazza S."/>
            <person name="Reed J."/>
            <person name="Reid J.F."/>
            <person name="Ring B.Z."/>
            <person name="Ringwald M."/>
            <person name="Rost B."/>
            <person name="Ruan Y."/>
            <person name="Salzberg S.L."/>
            <person name="Sandelin A."/>
            <person name="Schneider C."/>
            <person name="Schoenbach C."/>
            <person name="Sekiguchi K."/>
            <person name="Semple C.A."/>
            <person name="Seno S."/>
            <person name="Sessa L."/>
            <person name="Sheng Y."/>
            <person name="Shibata Y."/>
            <person name="Shimada H."/>
            <person name="Shimada K."/>
            <person name="Silva D."/>
            <person name="Sinclair B."/>
            <person name="Sperling S."/>
            <person name="Stupka E."/>
            <person name="Sugiura K."/>
            <person name="Sultana R."/>
            <person name="Takenaka Y."/>
            <person name="Taki K."/>
            <person name="Tammoja K."/>
            <person name="Tan S.L."/>
            <person name="Tang S."/>
            <person name="Taylor M.S."/>
            <person name="Tegner J."/>
            <person name="Teichmann S.A."/>
            <person name="Ueda H.R."/>
            <person name="van Nimwegen E."/>
            <person name="Verardo R."/>
            <person name="Wei C.L."/>
            <person name="Yagi K."/>
            <person name="Yamanishi H."/>
            <person name="Zabarovsky E."/>
            <person name="Zhu S."/>
            <person name="Zimmer A."/>
            <person name="Hide W."/>
            <person name="Bult C."/>
            <person name="Grimmond S.M."/>
            <person name="Teasdale R.D."/>
            <person name="Liu E.T."/>
            <person name="Brusic V."/>
            <person name="Quackenbush J."/>
            <person name="Wahlestedt C."/>
            <person name="Mattick J.S."/>
            <person name="Hume D.A."/>
            <person name="Kai C."/>
            <person name="Sasaki D."/>
            <person name="Tomaru Y."/>
            <person name="Fukuda S."/>
            <person name="Kanamori-Katayama M."/>
            <person name="Suzuki M."/>
            <person name="Aoki J."/>
            <person name="Arakawa T."/>
            <person name="Iida J."/>
            <person name="Imamura K."/>
            <person name="Itoh M."/>
            <person name="Kato T."/>
            <person name="Kawaji H."/>
            <person name="Kawagashira N."/>
            <person name="Kawashima T."/>
            <person name="Kojima M."/>
            <person name="Kondo S."/>
            <person name="Konno H."/>
            <person name="Nakano K."/>
            <person name="Ninomiya N."/>
            <person name="Nishio T."/>
            <person name="Okada M."/>
            <person name="Plessy C."/>
            <person name="Shibata K."/>
            <person name="Shiraki T."/>
            <person name="Suzuki S."/>
            <person name="Tagami M."/>
            <person name="Waki K."/>
            <person name="Watahiki A."/>
            <person name="Okamura-Oho Y."/>
            <person name="Suzuki H."/>
            <person name="Kawai J."/>
            <person name="Hayashizaki Y."/>
        </authorList>
    </citation>
    <scope>NUCLEOTIDE SEQUENCE [LARGE SCALE MRNA]</scope>
    <source>
        <strain>C57BL/6J</strain>
        <tissue>Lung</tissue>
    </source>
</reference>
<reference key="2">
    <citation type="journal article" date="2004" name="Genome Res.">
        <title>The status, quality, and expansion of the NIH full-length cDNA project: the Mammalian Gene Collection (MGC).</title>
        <authorList>
            <consortium name="The MGC Project Team"/>
        </authorList>
    </citation>
    <scope>NUCLEOTIDE SEQUENCE [LARGE SCALE MRNA]</scope>
    <source>
        <strain>C57BL/6J</strain>
        <tissue>Eye</tissue>
    </source>
</reference>
<reference key="3">
    <citation type="journal article" date="2010" name="Cell">
        <title>A tissue-specific atlas of mouse protein phosphorylation and expression.</title>
        <authorList>
            <person name="Huttlin E.L."/>
            <person name="Jedrychowski M.P."/>
            <person name="Elias J.E."/>
            <person name="Goswami T."/>
            <person name="Rad R."/>
            <person name="Beausoleil S.A."/>
            <person name="Villen J."/>
            <person name="Haas W."/>
            <person name="Sowa M.E."/>
            <person name="Gygi S.P."/>
        </authorList>
    </citation>
    <scope>IDENTIFICATION BY MASS SPECTROMETRY [LARGE SCALE ANALYSIS]</scope>
    <source>
        <tissue>Liver</tissue>
        <tissue>Lung</tissue>
        <tissue>Spleen</tissue>
        <tissue>Testis</tissue>
    </source>
</reference>
<protein>
    <recommendedName>
        <fullName>Single-strand selective monofunctional uracil DNA glycosylase</fullName>
        <ecNumber>3.2.2.-</ecNumber>
    </recommendedName>
</protein>
<organism>
    <name type="scientific">Mus musculus</name>
    <name type="common">Mouse</name>
    <dbReference type="NCBI Taxonomy" id="10090"/>
    <lineage>
        <taxon>Eukaryota</taxon>
        <taxon>Metazoa</taxon>
        <taxon>Chordata</taxon>
        <taxon>Craniata</taxon>
        <taxon>Vertebrata</taxon>
        <taxon>Euteleostomi</taxon>
        <taxon>Mammalia</taxon>
        <taxon>Eutheria</taxon>
        <taxon>Euarchontoglires</taxon>
        <taxon>Glires</taxon>
        <taxon>Rodentia</taxon>
        <taxon>Myomorpha</taxon>
        <taxon>Muroidea</taxon>
        <taxon>Muridae</taxon>
        <taxon>Murinae</taxon>
        <taxon>Mus</taxon>
        <taxon>Mus</taxon>
    </lineage>
</organism>
<proteinExistence type="evidence at protein level"/>
<comment type="function">
    <text evidence="2">Recognizes base lesions in the genome and initiates base excision DNA repair. Acts as a monofunctional DNA glycosylase specific for uracil (U) residues in DNA with a preference for single-stranded DNA substrates. The activity is greater toward mismatches (U/G) compared to matches (U/A). Excises uracil (U), 5-formyluracil (fU) and uracil derivatives bearing an oxidized group at C5 [5-hydroxyuracil (hoU) and 5-hydroxymethyluracil (hmU)] in ssDNA and dsDNA, but not analogous cytosine derivatives (5-hydroxycytosine and 5-formylcytosine), nor other oxidized bases. The activity is damage-specific and salt-dependent. The substrate preference is the following: ssDNA &gt; dsDNA (G pair) = dsDNA (A pair) at low salt concentration, and dsDNA (G pair) &gt; dsDNA (A pair) &gt; ssDNA at high salt concentration.</text>
</comment>
<comment type="subcellular location">
    <subcellularLocation>
        <location evidence="2">Nucleus</location>
    </subcellularLocation>
</comment>
<comment type="similarity">
    <text>Belongs to the uracil-DNA glycosylase (UDG) superfamily. SMUG1 family.</text>
</comment>
<evidence type="ECO:0000250" key="1"/>
<evidence type="ECO:0000250" key="2">
    <source>
        <dbReference type="UniProtKB" id="Q53HV7"/>
    </source>
</evidence>
<evidence type="ECO:0000305" key="3"/>
<dbReference type="EC" id="3.2.2.-"/>
<dbReference type="EMBL" id="AK004735">
    <property type="protein sequence ID" value="BAB23517.1"/>
    <property type="molecule type" value="mRNA"/>
</dbReference>
<dbReference type="EMBL" id="BC050253">
    <property type="protein sequence ID" value="AAH50253.1"/>
    <property type="molecule type" value="mRNA"/>
</dbReference>
<dbReference type="EMBL" id="BC062960">
    <property type="protein sequence ID" value="AAH62960.1"/>
    <property type="molecule type" value="mRNA"/>
</dbReference>
<dbReference type="CCDS" id="CCDS27898.1"/>
<dbReference type="RefSeq" id="NP_082161.2">
    <property type="nucleotide sequence ID" value="NM_027885.3"/>
</dbReference>
<dbReference type="RefSeq" id="XP_006521478.1">
    <property type="nucleotide sequence ID" value="XM_006521415.4"/>
</dbReference>
<dbReference type="RefSeq" id="XP_011244033.1">
    <property type="nucleotide sequence ID" value="XM_011245731.4"/>
</dbReference>
<dbReference type="RefSeq" id="XP_011244034.1">
    <property type="nucleotide sequence ID" value="XM_011245732.3"/>
</dbReference>
<dbReference type="RefSeq" id="XP_011244035.1">
    <property type="nucleotide sequence ID" value="XM_011245733.3"/>
</dbReference>
<dbReference type="RefSeq" id="XP_017172241.1">
    <property type="nucleotide sequence ID" value="XM_017316752.1"/>
</dbReference>
<dbReference type="RefSeq" id="XP_036015486.1">
    <property type="nucleotide sequence ID" value="XM_036159593.1"/>
</dbReference>
<dbReference type="RefSeq" id="XP_036015487.1">
    <property type="nucleotide sequence ID" value="XM_036159594.1"/>
</dbReference>
<dbReference type="RefSeq" id="XP_036015488.1">
    <property type="nucleotide sequence ID" value="XM_036159595.1"/>
</dbReference>
<dbReference type="SMR" id="Q6P5C5"/>
<dbReference type="FunCoup" id="Q6P5C5">
    <property type="interactions" value="2499"/>
</dbReference>
<dbReference type="IntAct" id="Q6P5C5">
    <property type="interactions" value="1"/>
</dbReference>
<dbReference type="STRING" id="10090.ENSMUSP00000155594"/>
<dbReference type="iPTMnet" id="Q6P5C5"/>
<dbReference type="PhosphoSitePlus" id="Q6P5C5"/>
<dbReference type="SwissPalm" id="Q6P5C5"/>
<dbReference type="PaxDb" id="10090-ENSMUSP00000065835"/>
<dbReference type="PeptideAtlas" id="Q6P5C5"/>
<dbReference type="ProteomicsDB" id="257531"/>
<dbReference type="Pumba" id="Q6P5C5"/>
<dbReference type="Antibodypedia" id="27322">
    <property type="antibodies" value="282 antibodies from 31 providers"/>
</dbReference>
<dbReference type="DNASU" id="71726"/>
<dbReference type="Ensembl" id="ENSMUST00000064067.9">
    <property type="protein sequence ID" value="ENSMUSP00000065835.9"/>
    <property type="gene ID" value="ENSMUSG00000036061.11"/>
</dbReference>
<dbReference type="Ensembl" id="ENSMUST00000229371.2">
    <property type="protein sequence ID" value="ENSMUSP00000155594.2"/>
    <property type="gene ID" value="ENSMUSG00000036061.11"/>
</dbReference>
<dbReference type="Ensembl" id="ENSMUST00000229377.2">
    <property type="protein sequence ID" value="ENSMUSP00000155700.2"/>
    <property type="gene ID" value="ENSMUSG00000036061.11"/>
</dbReference>
<dbReference type="GeneID" id="71726"/>
<dbReference type="KEGG" id="mmu:71726"/>
<dbReference type="UCSC" id="uc007xxh.1">
    <property type="organism name" value="mouse"/>
</dbReference>
<dbReference type="AGR" id="MGI:1918976"/>
<dbReference type="CTD" id="23583"/>
<dbReference type="MGI" id="MGI:1918976">
    <property type="gene designation" value="Smug1"/>
</dbReference>
<dbReference type="VEuPathDB" id="HostDB:ENSMUSG00000036061"/>
<dbReference type="eggNOG" id="ENOG502QT20">
    <property type="taxonomic scope" value="Eukaryota"/>
</dbReference>
<dbReference type="GeneTree" id="ENSGT00390000004897"/>
<dbReference type="HOGENOM" id="CLU_071760_2_0_1"/>
<dbReference type="InParanoid" id="Q6P5C5"/>
<dbReference type="OMA" id="VANYCPL"/>
<dbReference type="OrthoDB" id="408702at2759"/>
<dbReference type="PhylomeDB" id="Q6P5C5"/>
<dbReference type="TreeFam" id="TF324356"/>
<dbReference type="BRENDA" id="3.2.2.27">
    <property type="organism ID" value="3474"/>
</dbReference>
<dbReference type="Reactome" id="R-MMU-110329">
    <property type="pathway name" value="Cleavage of the damaged pyrimidine"/>
</dbReference>
<dbReference type="Reactome" id="R-MMU-110357">
    <property type="pathway name" value="Displacement of DNA glycosylase by APEX1"/>
</dbReference>
<dbReference type="BioGRID-ORCS" id="71726">
    <property type="hits" value="5 hits in 112 CRISPR screens"/>
</dbReference>
<dbReference type="ChiTaRS" id="Smug1">
    <property type="organism name" value="mouse"/>
</dbReference>
<dbReference type="PRO" id="PR:Q6P5C5"/>
<dbReference type="Proteomes" id="UP000000589">
    <property type="component" value="Chromosome 15"/>
</dbReference>
<dbReference type="RNAct" id="Q6P5C5">
    <property type="molecule type" value="protein"/>
</dbReference>
<dbReference type="Bgee" id="ENSMUSG00000036061">
    <property type="expression patterns" value="Expressed in secondary oocyte and 226 other cell types or tissues"/>
</dbReference>
<dbReference type="ExpressionAtlas" id="Q6P5C5">
    <property type="expression patterns" value="baseline and differential"/>
</dbReference>
<dbReference type="GO" id="GO:0005829">
    <property type="term" value="C:cytosol"/>
    <property type="evidence" value="ECO:0007669"/>
    <property type="project" value="Ensembl"/>
</dbReference>
<dbReference type="GO" id="GO:0001650">
    <property type="term" value="C:fibrillar center"/>
    <property type="evidence" value="ECO:0007669"/>
    <property type="project" value="Ensembl"/>
</dbReference>
<dbReference type="GO" id="GO:0005730">
    <property type="term" value="C:nucleolus"/>
    <property type="evidence" value="ECO:0000250"/>
    <property type="project" value="HGNC-UCL"/>
</dbReference>
<dbReference type="GO" id="GO:0005654">
    <property type="term" value="C:nucleoplasm"/>
    <property type="evidence" value="ECO:0007669"/>
    <property type="project" value="Ensembl"/>
</dbReference>
<dbReference type="GO" id="GO:0019104">
    <property type="term" value="F:DNA N-glycosylase activity"/>
    <property type="evidence" value="ECO:0000250"/>
    <property type="project" value="HGNC-UCL"/>
</dbReference>
<dbReference type="GO" id="GO:0000702">
    <property type="term" value="F:oxidized base lesion DNA N-glycosylase activity"/>
    <property type="evidence" value="ECO:0000247"/>
    <property type="project" value="MGI"/>
</dbReference>
<dbReference type="GO" id="GO:0017065">
    <property type="term" value="F:single-strand selective uracil DNA N-glycosylase activity"/>
    <property type="evidence" value="ECO:0000250"/>
    <property type="project" value="HGNC-UCL"/>
</dbReference>
<dbReference type="GO" id="GO:0003697">
    <property type="term" value="F:single-stranded DNA binding"/>
    <property type="evidence" value="ECO:0000247"/>
    <property type="project" value="MGI"/>
</dbReference>
<dbReference type="GO" id="GO:0004844">
    <property type="term" value="F:uracil DNA N-glycosylase activity"/>
    <property type="evidence" value="ECO:0000250"/>
    <property type="project" value="HGNC-UCL"/>
</dbReference>
<dbReference type="GO" id="GO:0006284">
    <property type="term" value="P:base-excision repair"/>
    <property type="evidence" value="ECO:0000250"/>
    <property type="project" value="HGNC-UCL"/>
</dbReference>
<dbReference type="GO" id="GO:0006281">
    <property type="term" value="P:DNA repair"/>
    <property type="evidence" value="ECO:0000247"/>
    <property type="project" value="MGI"/>
</dbReference>
<dbReference type="CDD" id="cd19374">
    <property type="entry name" value="UDG-F3_SMUG1-like"/>
    <property type="match status" value="1"/>
</dbReference>
<dbReference type="FunFam" id="3.40.470.10:FF:000005">
    <property type="entry name" value="Single-strand selective monofunctional uracil DNA glycosylase"/>
    <property type="match status" value="1"/>
</dbReference>
<dbReference type="Gene3D" id="3.40.470.10">
    <property type="entry name" value="Uracil-DNA glycosylase-like domain"/>
    <property type="match status" value="1"/>
</dbReference>
<dbReference type="InterPro" id="IPR039134">
    <property type="entry name" value="SMUG1"/>
</dbReference>
<dbReference type="InterPro" id="IPR005122">
    <property type="entry name" value="Uracil-DNA_glycosylase-like"/>
</dbReference>
<dbReference type="InterPro" id="IPR036895">
    <property type="entry name" value="Uracil-DNA_glycosylase-like_sf"/>
</dbReference>
<dbReference type="PANTHER" id="PTHR13235">
    <property type="entry name" value="SINGLE-STRAND SELECTIVE MONOFUNCTIONAL URACIL DNA GLYCOSYLASE"/>
    <property type="match status" value="1"/>
</dbReference>
<dbReference type="PANTHER" id="PTHR13235:SF2">
    <property type="entry name" value="SINGLE-STRAND SELECTIVE MONOFUNCTIONAL URACIL DNA GLYCOSYLASE"/>
    <property type="match status" value="1"/>
</dbReference>
<dbReference type="Pfam" id="PF03167">
    <property type="entry name" value="UDG"/>
    <property type="match status" value="1"/>
</dbReference>
<dbReference type="SUPFAM" id="SSF52141">
    <property type="entry name" value="Uracil-DNA glycosylase-like"/>
    <property type="match status" value="1"/>
</dbReference>
<sequence>MAASQTFPLGPTHEPASALMEPLPCTRSLAEGFLEEELRLNAELSQLQFPEPVGVIYNPVDYAWEPHRNYVTRYCQGPKEVLFLGMNPGPFGMAQTGVPFGEVNVVRDWLGVGGPVLTPPQEHPKRPVLGLECPQSEVSGARFWGFFRTLCGQPQVFFRHCFVHNLCPLLFLAPSGRNLTPAELPAKQREQLLSICDAALCRQVQLLGVRLVVGVGRLAEQRARRALAGLTPEVQVEGLLHPSPRSAQANKGWEAAARERLQELGLLPLLTDEGSARPT</sequence>